<reference key="1">
    <citation type="submission" date="2004-11" db="EMBL/GenBank/DDBJ databases">
        <authorList>
            <consortium name="The German cDNA consortium"/>
        </authorList>
    </citation>
    <scope>NUCLEOTIDE SEQUENCE [LARGE SCALE MRNA]</scope>
    <source>
        <tissue>Brain cortex</tissue>
        <tissue>Kidney</tissue>
    </source>
</reference>
<organism>
    <name type="scientific">Pongo abelii</name>
    <name type="common">Sumatran orangutan</name>
    <name type="synonym">Pongo pygmaeus abelii</name>
    <dbReference type="NCBI Taxonomy" id="9601"/>
    <lineage>
        <taxon>Eukaryota</taxon>
        <taxon>Metazoa</taxon>
        <taxon>Chordata</taxon>
        <taxon>Craniata</taxon>
        <taxon>Vertebrata</taxon>
        <taxon>Euteleostomi</taxon>
        <taxon>Mammalia</taxon>
        <taxon>Eutheria</taxon>
        <taxon>Euarchontoglires</taxon>
        <taxon>Primates</taxon>
        <taxon>Haplorrhini</taxon>
        <taxon>Catarrhini</taxon>
        <taxon>Hominidae</taxon>
        <taxon>Pongo</taxon>
    </lineage>
</organism>
<proteinExistence type="evidence at transcript level"/>
<feature type="chain" id="PRO_0000261396" description="Fatty acyl-CoA reductase 1">
    <location>
        <begin position="1"/>
        <end position="515"/>
    </location>
</feature>
<feature type="topological domain" description="Cytoplasmic" evidence="1">
    <location>
        <begin position="1"/>
        <end position="465"/>
    </location>
</feature>
<feature type="transmembrane region" description="Helical" evidence="3">
    <location>
        <begin position="466"/>
        <end position="483"/>
    </location>
</feature>
<feature type="topological domain" description="Peroxisomal" evidence="1">
    <location>
        <begin position="484"/>
        <end position="515"/>
    </location>
</feature>
<feature type="region of interest" description="Necessary and sufficient for PEX19-mediated localization into peroxisome membrane" evidence="1">
    <location>
        <begin position="451"/>
        <end position="507"/>
    </location>
</feature>
<evidence type="ECO:0000250" key="1">
    <source>
        <dbReference type="UniProtKB" id="Q8WVX9"/>
    </source>
</evidence>
<evidence type="ECO:0000250" key="2">
    <source>
        <dbReference type="UniProtKB" id="Q922J9"/>
    </source>
</evidence>
<evidence type="ECO:0000255" key="3"/>
<evidence type="ECO:0000305" key="4"/>
<dbReference type="EC" id="1.2.1.84" evidence="1"/>
<dbReference type="EMBL" id="CR859126">
    <property type="protein sequence ID" value="CAH91318.1"/>
    <property type="molecule type" value="mRNA"/>
</dbReference>
<dbReference type="EMBL" id="CR859921">
    <property type="protein sequence ID" value="CAH92076.1"/>
    <property type="molecule type" value="mRNA"/>
</dbReference>
<dbReference type="RefSeq" id="NP_001126210.1">
    <property type="nucleotide sequence ID" value="NM_001132738.1"/>
</dbReference>
<dbReference type="SMR" id="Q5R834"/>
<dbReference type="FunCoup" id="Q5R834">
    <property type="interactions" value="1597"/>
</dbReference>
<dbReference type="STRING" id="9601.ENSPPYP00000003982"/>
<dbReference type="Ensembl" id="ENSPPYT00000004135.3">
    <property type="protein sequence ID" value="ENSPPYP00000003982.2"/>
    <property type="gene ID" value="ENSPPYG00000003470.3"/>
</dbReference>
<dbReference type="GeneID" id="100173178"/>
<dbReference type="KEGG" id="pon:100173178"/>
<dbReference type="CTD" id="84188"/>
<dbReference type="eggNOG" id="KOG1221">
    <property type="taxonomic scope" value="Eukaryota"/>
</dbReference>
<dbReference type="GeneTree" id="ENSGT00390000006367"/>
<dbReference type="HOGENOM" id="CLU_024661_0_0_1"/>
<dbReference type="InParanoid" id="Q5R834"/>
<dbReference type="OrthoDB" id="429813at2759"/>
<dbReference type="TreeFam" id="TF313011"/>
<dbReference type="Proteomes" id="UP000001595">
    <property type="component" value="Chromosome 11"/>
</dbReference>
<dbReference type="GO" id="GO:0005778">
    <property type="term" value="C:peroxisomal membrane"/>
    <property type="evidence" value="ECO:0000250"/>
    <property type="project" value="UniProtKB"/>
</dbReference>
<dbReference type="GO" id="GO:0102965">
    <property type="term" value="F:alcohol-forming long-chain fatty acyl-CoA reductase activity"/>
    <property type="evidence" value="ECO:0000250"/>
    <property type="project" value="UniProtKB"/>
</dbReference>
<dbReference type="GO" id="GO:0080019">
    <property type="term" value="F:alcohol-forming very long-chain fatty acyl-CoA reductase activity"/>
    <property type="evidence" value="ECO:0007669"/>
    <property type="project" value="InterPro"/>
</dbReference>
<dbReference type="GO" id="GO:0008611">
    <property type="term" value="P:ether lipid biosynthetic process"/>
    <property type="evidence" value="ECO:0000250"/>
    <property type="project" value="UniProtKB"/>
</dbReference>
<dbReference type="GO" id="GO:0035336">
    <property type="term" value="P:long-chain fatty-acyl-CoA metabolic process"/>
    <property type="evidence" value="ECO:0007669"/>
    <property type="project" value="TreeGrafter"/>
</dbReference>
<dbReference type="GO" id="GO:0010025">
    <property type="term" value="P:wax biosynthetic process"/>
    <property type="evidence" value="ECO:0000250"/>
    <property type="project" value="UniProtKB"/>
</dbReference>
<dbReference type="CDD" id="cd05236">
    <property type="entry name" value="FAR-N_SDR_e"/>
    <property type="match status" value="1"/>
</dbReference>
<dbReference type="CDD" id="cd09071">
    <property type="entry name" value="FAR_C"/>
    <property type="match status" value="1"/>
</dbReference>
<dbReference type="FunFam" id="3.40.50.720:FF:000123">
    <property type="entry name" value="Fatty acyl-CoA reductase"/>
    <property type="match status" value="1"/>
</dbReference>
<dbReference type="Gene3D" id="3.40.50.720">
    <property type="entry name" value="NAD(P)-binding Rossmann-like Domain"/>
    <property type="match status" value="1"/>
</dbReference>
<dbReference type="InterPro" id="IPR026055">
    <property type="entry name" value="FAR"/>
</dbReference>
<dbReference type="InterPro" id="IPR033640">
    <property type="entry name" value="FAR_C"/>
</dbReference>
<dbReference type="InterPro" id="IPR013120">
    <property type="entry name" value="Far_NAD-bd"/>
</dbReference>
<dbReference type="InterPro" id="IPR036291">
    <property type="entry name" value="NAD(P)-bd_dom_sf"/>
</dbReference>
<dbReference type="PANTHER" id="PTHR11011:SF119">
    <property type="entry name" value="FATTY ACYL-COA REDUCTASE 1"/>
    <property type="match status" value="1"/>
</dbReference>
<dbReference type="PANTHER" id="PTHR11011">
    <property type="entry name" value="MALE STERILITY PROTEIN 2-RELATED"/>
    <property type="match status" value="1"/>
</dbReference>
<dbReference type="Pfam" id="PF07993">
    <property type="entry name" value="NAD_binding_4"/>
    <property type="match status" value="1"/>
</dbReference>
<dbReference type="Pfam" id="PF03015">
    <property type="entry name" value="Sterile"/>
    <property type="match status" value="1"/>
</dbReference>
<dbReference type="SUPFAM" id="SSF51735">
    <property type="entry name" value="NAD(P)-binding Rossmann-fold domains"/>
    <property type="match status" value="1"/>
</dbReference>
<sequence length="515" mass="59357">MVSIPEYYEGKNVLLTGATGFLGKVLLEKLLRSCPKVNSVYVLVRQKAGQTPQERVEEVLSGKLFDRLRDENPDFREKIIAINSELTQPKLALSEEDKEVIIESTNIIFHCAATVRFNENLRDAVQLNVIATRQLILLAQQMKNLEVFMHVSTAYAYCNRKHIDEVVYPPPVDPKKLIDSLEWMDDGLVNDITPKLIGDRPNTYIYTKALAEYVVQQEGAKLNVAIVRPSIVGASWKEPFPGWIDNFNGPSGLFIAAGKGILRTIRASNNALADLVPVDVVVNMSLAAAWYSGVNRPRNIMVYNCTTGSTNPFHWGEVEYHVISTFKRNPLEQAFRRPNVNLTSNHLLYHYWIAVSHKAPAFLYDIYLRMTGRSPRMMKTITRLHKAMVFLEYFTSNSWVWNTDNVNMLMNQLNPEDKKTFNIDVRQLHWAEYIENYCLGTKKYVLNEEMSGLPAARKHLNKLRNIRYGFNTILVILIWRIFIARSQMARNIWYFVVSLCYKFLSYFRASSTMRY</sequence>
<accession>Q5R834</accession>
<protein>
    <recommendedName>
        <fullName evidence="1">Fatty acyl-CoA reductase 1</fullName>
        <shortName>Far1</shortName>
        <ecNumber evidence="1">1.2.1.84</ecNumber>
    </recommendedName>
</protein>
<name>FACR1_PONAB</name>
<keyword id="KW-0444">Lipid biosynthesis</keyword>
<keyword id="KW-0443">Lipid metabolism</keyword>
<keyword id="KW-0472">Membrane</keyword>
<keyword id="KW-0521">NADP</keyword>
<keyword id="KW-0560">Oxidoreductase</keyword>
<keyword id="KW-0576">Peroxisome</keyword>
<keyword id="KW-1185">Reference proteome</keyword>
<keyword id="KW-0812">Transmembrane</keyword>
<keyword id="KW-1133">Transmembrane helix</keyword>
<comment type="function">
    <text evidence="2">Catalyzes the reduction of saturated and unsaturated C16 or C18 fatty acyl-CoA to fatty alcohols. It plays an essential role in the production of ether lipids/plasmalogens which synthesis requires fatty alcohols. In parallel, it is also required for wax monoesters production since fatty alcohols also constitute a substrate for their synthesis.</text>
</comment>
<comment type="catalytic activity">
    <reaction evidence="1">
        <text>a long-chain fatty acyl-CoA + 2 NADPH + 2 H(+) = a long-chain primary fatty alcohol + 2 NADP(+) + CoA</text>
        <dbReference type="Rhea" id="RHEA:52716"/>
        <dbReference type="ChEBI" id="CHEBI:15378"/>
        <dbReference type="ChEBI" id="CHEBI:57287"/>
        <dbReference type="ChEBI" id="CHEBI:57783"/>
        <dbReference type="ChEBI" id="CHEBI:58349"/>
        <dbReference type="ChEBI" id="CHEBI:77396"/>
        <dbReference type="ChEBI" id="CHEBI:83139"/>
        <dbReference type="EC" id="1.2.1.84"/>
    </reaction>
    <physiologicalReaction direction="left-to-right" evidence="1">
        <dbReference type="Rhea" id="RHEA:52717"/>
    </physiologicalReaction>
</comment>
<comment type="catalytic activity">
    <reaction evidence="1">
        <text>hexadecanoyl-CoA + 2 NADPH + 2 H(+) = hexadecan-1-ol + 2 NADP(+) + CoA</text>
        <dbReference type="Rhea" id="RHEA:36315"/>
        <dbReference type="ChEBI" id="CHEBI:15378"/>
        <dbReference type="ChEBI" id="CHEBI:16125"/>
        <dbReference type="ChEBI" id="CHEBI:57287"/>
        <dbReference type="ChEBI" id="CHEBI:57379"/>
        <dbReference type="ChEBI" id="CHEBI:57783"/>
        <dbReference type="ChEBI" id="CHEBI:58349"/>
        <dbReference type="EC" id="1.2.1.84"/>
    </reaction>
    <physiologicalReaction direction="left-to-right" evidence="1">
        <dbReference type="Rhea" id="RHEA:36316"/>
    </physiologicalReaction>
</comment>
<comment type="catalytic activity">
    <reaction evidence="2">
        <text>octadecanoyl-CoA + 2 NADPH + 2 H(+) = octadecan-1-ol + 2 NADP(+) + CoA</text>
        <dbReference type="Rhea" id="RHEA:36319"/>
        <dbReference type="ChEBI" id="CHEBI:15378"/>
        <dbReference type="ChEBI" id="CHEBI:32154"/>
        <dbReference type="ChEBI" id="CHEBI:57287"/>
        <dbReference type="ChEBI" id="CHEBI:57394"/>
        <dbReference type="ChEBI" id="CHEBI:57783"/>
        <dbReference type="ChEBI" id="CHEBI:58349"/>
        <dbReference type="EC" id="1.2.1.84"/>
    </reaction>
    <physiologicalReaction direction="left-to-right" evidence="2">
        <dbReference type="Rhea" id="RHEA:36320"/>
    </physiologicalReaction>
</comment>
<comment type="catalytic activity">
    <reaction evidence="2">
        <text>(9Z)-octadecenoyl-CoA + 2 NADPH + 2 H(+) = (9Z)-octadecen-1-ol + 2 NADP(+) + CoA</text>
        <dbReference type="Rhea" id="RHEA:36323"/>
        <dbReference type="ChEBI" id="CHEBI:15378"/>
        <dbReference type="ChEBI" id="CHEBI:57287"/>
        <dbReference type="ChEBI" id="CHEBI:57387"/>
        <dbReference type="ChEBI" id="CHEBI:57783"/>
        <dbReference type="ChEBI" id="CHEBI:58349"/>
        <dbReference type="ChEBI" id="CHEBI:73504"/>
    </reaction>
    <physiologicalReaction direction="left-to-right" evidence="2">
        <dbReference type="Rhea" id="RHEA:36324"/>
    </physiologicalReaction>
</comment>
<comment type="catalytic activity">
    <reaction evidence="2">
        <text>(9Z,12Z)-octadecadienoyl-CoA + 2 NADPH + 2 H(+) = (9Z,12Z)-octadecadien-1-ol + 2 NADP(+) + CoA</text>
        <dbReference type="Rhea" id="RHEA:36363"/>
        <dbReference type="ChEBI" id="CHEBI:15378"/>
        <dbReference type="ChEBI" id="CHEBI:57287"/>
        <dbReference type="ChEBI" id="CHEBI:57383"/>
        <dbReference type="ChEBI" id="CHEBI:57783"/>
        <dbReference type="ChEBI" id="CHEBI:58349"/>
        <dbReference type="ChEBI" id="CHEBI:73534"/>
    </reaction>
    <physiologicalReaction direction="left-to-right" evidence="2">
        <dbReference type="Rhea" id="RHEA:36364"/>
    </physiologicalReaction>
</comment>
<comment type="catalytic activity">
    <reaction evidence="1">
        <text>eicosanoyl-CoA + 2 NADPH + 2 H(+) = eicosan-1-ol + 2 NADP(+) + CoA</text>
        <dbReference type="Rhea" id="RHEA:81727"/>
        <dbReference type="ChEBI" id="CHEBI:15378"/>
        <dbReference type="ChEBI" id="CHEBI:57287"/>
        <dbReference type="ChEBI" id="CHEBI:57380"/>
        <dbReference type="ChEBI" id="CHEBI:57783"/>
        <dbReference type="ChEBI" id="CHEBI:58349"/>
        <dbReference type="ChEBI" id="CHEBI:75627"/>
    </reaction>
    <physiologicalReaction direction="left-to-right" evidence="1">
        <dbReference type="Rhea" id="RHEA:81728"/>
    </physiologicalReaction>
</comment>
<comment type="catalytic activity">
    <reaction evidence="1">
        <text>16-methylheptadecanoyl-CoA + 2 NADPH + 2 H(+) = 16-methylheptadecan-1-ol + 2 NADP(+) + CoA</text>
        <dbReference type="Rhea" id="RHEA:81763"/>
        <dbReference type="ChEBI" id="CHEBI:15378"/>
        <dbReference type="ChEBI" id="CHEBI:57287"/>
        <dbReference type="ChEBI" id="CHEBI:57783"/>
        <dbReference type="ChEBI" id="CHEBI:58349"/>
        <dbReference type="ChEBI" id="CHEBI:84911"/>
        <dbReference type="ChEBI" id="CHEBI:231998"/>
    </reaction>
    <physiologicalReaction direction="left-to-right" evidence="1">
        <dbReference type="Rhea" id="RHEA:81764"/>
    </physiologicalReaction>
</comment>
<comment type="catalytic activity">
    <reaction evidence="1">
        <text>18-methylnonadecanoyl-CoA + 2 NADPH + 2 H(+) = 18-methylnonadecan-1-ol + 2 NADP(+) + CoA</text>
        <dbReference type="Rhea" id="RHEA:81767"/>
        <dbReference type="ChEBI" id="CHEBI:15378"/>
        <dbReference type="ChEBI" id="CHEBI:57287"/>
        <dbReference type="ChEBI" id="CHEBI:57783"/>
        <dbReference type="ChEBI" id="CHEBI:58349"/>
        <dbReference type="ChEBI" id="CHEBI:84914"/>
        <dbReference type="ChEBI" id="CHEBI:231999"/>
    </reaction>
    <physiologicalReaction direction="left-to-right" evidence="1">
        <dbReference type="Rhea" id="RHEA:81768"/>
    </physiologicalReaction>
</comment>
<comment type="subunit">
    <text evidence="1">Interacts with PEX19; PEX19 mediates the targeting of FAR1 to peroxisomes.</text>
</comment>
<comment type="subcellular location">
    <subcellularLocation>
        <location evidence="1">Peroxisome membrane</location>
        <topology evidence="1">Single-pass membrane protein</topology>
    </subcellularLocation>
</comment>
<comment type="similarity">
    <text evidence="4">Belongs to the fatty acyl-CoA reductase family.</text>
</comment>
<gene>
    <name evidence="1" type="primary">FAR1</name>
</gene>